<feature type="chain" id="PRO_1000165663" description="Large ribosomal subunit protein uL1">
    <location>
        <begin position="1"/>
        <end position="227"/>
    </location>
</feature>
<evidence type="ECO:0000255" key="1">
    <source>
        <dbReference type="HAMAP-Rule" id="MF_01318"/>
    </source>
</evidence>
<evidence type="ECO:0000305" key="2"/>
<name>RL1_BREBN</name>
<dbReference type="EMBL" id="AP008955">
    <property type="protein sequence ID" value="BAH41184.1"/>
    <property type="molecule type" value="Genomic_DNA"/>
</dbReference>
<dbReference type="RefSeq" id="WP_012683972.1">
    <property type="nucleotide sequence ID" value="NC_012491.1"/>
</dbReference>
<dbReference type="SMR" id="C0ZIG6"/>
<dbReference type="STRING" id="358681.BBR47_02070"/>
<dbReference type="KEGG" id="bbe:BBR47_02070"/>
<dbReference type="eggNOG" id="COG0081">
    <property type="taxonomic scope" value="Bacteria"/>
</dbReference>
<dbReference type="HOGENOM" id="CLU_062853_0_0_9"/>
<dbReference type="Proteomes" id="UP000001877">
    <property type="component" value="Chromosome"/>
</dbReference>
<dbReference type="GO" id="GO:0015934">
    <property type="term" value="C:large ribosomal subunit"/>
    <property type="evidence" value="ECO:0007669"/>
    <property type="project" value="InterPro"/>
</dbReference>
<dbReference type="GO" id="GO:0019843">
    <property type="term" value="F:rRNA binding"/>
    <property type="evidence" value="ECO:0007669"/>
    <property type="project" value="UniProtKB-UniRule"/>
</dbReference>
<dbReference type="GO" id="GO:0003735">
    <property type="term" value="F:structural constituent of ribosome"/>
    <property type="evidence" value="ECO:0007669"/>
    <property type="project" value="InterPro"/>
</dbReference>
<dbReference type="GO" id="GO:0000049">
    <property type="term" value="F:tRNA binding"/>
    <property type="evidence" value="ECO:0007669"/>
    <property type="project" value="UniProtKB-KW"/>
</dbReference>
<dbReference type="GO" id="GO:0006417">
    <property type="term" value="P:regulation of translation"/>
    <property type="evidence" value="ECO:0007669"/>
    <property type="project" value="UniProtKB-KW"/>
</dbReference>
<dbReference type="GO" id="GO:0006412">
    <property type="term" value="P:translation"/>
    <property type="evidence" value="ECO:0007669"/>
    <property type="project" value="UniProtKB-UniRule"/>
</dbReference>
<dbReference type="CDD" id="cd00403">
    <property type="entry name" value="Ribosomal_L1"/>
    <property type="match status" value="1"/>
</dbReference>
<dbReference type="FunFam" id="3.40.50.790:FF:000001">
    <property type="entry name" value="50S ribosomal protein L1"/>
    <property type="match status" value="1"/>
</dbReference>
<dbReference type="Gene3D" id="3.30.190.20">
    <property type="match status" value="1"/>
</dbReference>
<dbReference type="Gene3D" id="3.40.50.790">
    <property type="match status" value="1"/>
</dbReference>
<dbReference type="HAMAP" id="MF_01318_B">
    <property type="entry name" value="Ribosomal_uL1_B"/>
    <property type="match status" value="1"/>
</dbReference>
<dbReference type="InterPro" id="IPR005878">
    <property type="entry name" value="Ribosom_uL1_bac-type"/>
</dbReference>
<dbReference type="InterPro" id="IPR002143">
    <property type="entry name" value="Ribosomal_uL1"/>
</dbReference>
<dbReference type="InterPro" id="IPR023674">
    <property type="entry name" value="Ribosomal_uL1-like"/>
</dbReference>
<dbReference type="InterPro" id="IPR028364">
    <property type="entry name" value="Ribosomal_uL1/biogenesis"/>
</dbReference>
<dbReference type="InterPro" id="IPR016095">
    <property type="entry name" value="Ribosomal_uL1_3-a/b-sand"/>
</dbReference>
<dbReference type="InterPro" id="IPR023673">
    <property type="entry name" value="Ribosomal_uL1_CS"/>
</dbReference>
<dbReference type="NCBIfam" id="TIGR01169">
    <property type="entry name" value="rplA_bact"/>
    <property type="match status" value="1"/>
</dbReference>
<dbReference type="PANTHER" id="PTHR36427">
    <property type="entry name" value="54S RIBOSOMAL PROTEIN L1, MITOCHONDRIAL"/>
    <property type="match status" value="1"/>
</dbReference>
<dbReference type="PANTHER" id="PTHR36427:SF3">
    <property type="entry name" value="LARGE RIBOSOMAL SUBUNIT PROTEIN UL1M"/>
    <property type="match status" value="1"/>
</dbReference>
<dbReference type="Pfam" id="PF00687">
    <property type="entry name" value="Ribosomal_L1"/>
    <property type="match status" value="1"/>
</dbReference>
<dbReference type="PIRSF" id="PIRSF002155">
    <property type="entry name" value="Ribosomal_L1"/>
    <property type="match status" value="1"/>
</dbReference>
<dbReference type="SUPFAM" id="SSF56808">
    <property type="entry name" value="Ribosomal protein L1"/>
    <property type="match status" value="1"/>
</dbReference>
<dbReference type="PROSITE" id="PS01199">
    <property type="entry name" value="RIBOSOMAL_L1"/>
    <property type="match status" value="1"/>
</dbReference>
<accession>C0ZIG6</accession>
<proteinExistence type="inferred from homology"/>
<organism>
    <name type="scientific">Brevibacillus brevis (strain 47 / JCM 6285 / NBRC 100599)</name>
    <dbReference type="NCBI Taxonomy" id="358681"/>
    <lineage>
        <taxon>Bacteria</taxon>
        <taxon>Bacillati</taxon>
        <taxon>Bacillota</taxon>
        <taxon>Bacilli</taxon>
        <taxon>Bacillales</taxon>
        <taxon>Paenibacillaceae</taxon>
        <taxon>Brevibacillus</taxon>
    </lineage>
</organism>
<comment type="function">
    <text evidence="1">Binds directly to 23S rRNA. The L1 stalk is quite mobile in the ribosome, and is involved in E site tRNA release.</text>
</comment>
<comment type="function">
    <text evidence="1">Protein L1 is also a translational repressor protein, it controls the translation of the L11 operon by binding to its mRNA.</text>
</comment>
<comment type="subunit">
    <text evidence="1">Part of the 50S ribosomal subunit.</text>
</comment>
<comment type="similarity">
    <text evidence="1">Belongs to the universal ribosomal protein uL1 family.</text>
</comment>
<reference key="1">
    <citation type="submission" date="2005-03" db="EMBL/GenBank/DDBJ databases">
        <title>Brevibacillus brevis strain 47, complete genome.</title>
        <authorList>
            <person name="Hosoyama A."/>
            <person name="Yamada R."/>
            <person name="Hongo Y."/>
            <person name="Terui Y."/>
            <person name="Ankai A."/>
            <person name="Masuyama W."/>
            <person name="Sekiguchi M."/>
            <person name="Takeda T."/>
            <person name="Asano K."/>
            <person name="Ohji S."/>
            <person name="Ichikawa N."/>
            <person name="Narita S."/>
            <person name="Aoki N."/>
            <person name="Miura H."/>
            <person name="Matsushita S."/>
            <person name="Sekigawa T."/>
            <person name="Yamagata H."/>
            <person name="Yoshikawa H."/>
            <person name="Udaka S."/>
            <person name="Tanikawa S."/>
            <person name="Fujita N."/>
        </authorList>
    </citation>
    <scope>NUCLEOTIDE SEQUENCE [LARGE SCALE GENOMIC DNA]</scope>
    <source>
        <strain>47 / JCM 6285 / NBRC 100599</strain>
    </source>
</reference>
<gene>
    <name evidence="1" type="primary">rplA</name>
    <name type="ordered locus">BBR47_02070</name>
</gene>
<keyword id="KW-1185">Reference proteome</keyword>
<keyword id="KW-0678">Repressor</keyword>
<keyword id="KW-0687">Ribonucleoprotein</keyword>
<keyword id="KW-0689">Ribosomal protein</keyword>
<keyword id="KW-0694">RNA-binding</keyword>
<keyword id="KW-0699">rRNA-binding</keyword>
<keyword id="KW-0810">Translation regulation</keyword>
<keyword id="KW-0820">tRNA-binding</keyword>
<protein>
    <recommendedName>
        <fullName evidence="1">Large ribosomal subunit protein uL1</fullName>
    </recommendedName>
    <alternativeName>
        <fullName evidence="2">50S ribosomal protein L1</fullName>
    </alternativeName>
</protein>
<sequence>MAKKGKKYQDAVKLVDKNKVYEVVEGVELVKKAATAKFDETVEVAFRLGVDPKRADQQIRGAVVLPHGTGKVQRVLVFAKGEKAKDAEAAGADFVGDADMIAKIQGGWFDFDVVVATPDMMGEVGKLGRVLGPKGLMPNPKTGTVTFDVTKAVNEIKAGKIEYRVDKAGNIHAPIGKASFDADKLVENLAALTEALNRAKPAAAKGVYMRNVTLSSTMGPGVRVAVK</sequence>